<feature type="initiator methionine" description="Removed" evidence="11 12 13">
    <location>
        <position position="1"/>
    </location>
</feature>
<feature type="chain" id="PRO_0000050820" description="Dynein axonemal assembly factor 5">
    <location>
        <begin position="2"/>
        <end position="855"/>
    </location>
</feature>
<feature type="repeat" description="HEAT 1">
    <location>
        <begin position="71"/>
        <end position="109"/>
    </location>
</feature>
<feature type="repeat" description="HEAT 2">
    <location>
        <begin position="202"/>
        <end position="240"/>
    </location>
</feature>
<feature type="repeat" description="HEAT 3">
    <location>
        <begin position="241"/>
        <end position="278"/>
    </location>
</feature>
<feature type="repeat" description="HEAT 4">
    <location>
        <begin position="280"/>
        <end position="318"/>
    </location>
</feature>
<feature type="repeat" description="HEAT 5">
    <location>
        <begin position="354"/>
        <end position="376"/>
    </location>
</feature>
<feature type="repeat" description="HEAT 6">
    <location>
        <begin position="377"/>
        <end position="414"/>
    </location>
</feature>
<feature type="repeat" description="HEAT 7">
    <location>
        <begin position="599"/>
        <end position="638"/>
    </location>
</feature>
<feature type="repeat" description="HEAT 8">
    <location>
        <begin position="696"/>
        <end position="734"/>
    </location>
</feature>
<feature type="repeat" description="HEAT 9">
    <location>
        <begin position="738"/>
        <end position="776"/>
    </location>
</feature>
<feature type="repeat" description="HEAT 10">
    <location>
        <begin position="784"/>
        <end position="822"/>
    </location>
</feature>
<feature type="modified residue" description="N-acetylalanine" evidence="11 12 13">
    <location>
        <position position="2"/>
    </location>
</feature>
<feature type="splice variant" id="VSP_016109" description="In isoform 3." evidence="6">
    <location>
        <begin position="1"/>
        <end position="620"/>
    </location>
</feature>
<feature type="splice variant" id="VSP_016110" description="In isoform 2." evidence="7">
    <original>EVLKEGSGLFPDLLVRETEAVIHKHRSATYCEQLLQHVQAVPATQ</original>
    <variation>DVPGSPSPSAMIGSFLRPPHPWRTVSQLNLFSS</variation>
    <location>
        <begin position="811"/>
        <end position="855"/>
    </location>
</feature>
<feature type="sequence variant" id="VAR_060463" description="In dbSNP:rs73258248.">
    <original>R</original>
    <variation>C</variation>
    <location>
        <position position="560"/>
    </location>
</feature>
<feature type="sequence variant" id="VAR_056911" description="In dbSNP:rs4720951.">
    <original>V</original>
    <variation>A</variation>
    <location>
        <position position="632"/>
    </location>
</feature>
<feature type="sequence variant" id="VAR_060464" description="In dbSNP:rs3922641." evidence="1 2 3">
    <original>R</original>
    <variation>K</variation>
    <location>
        <position position="743"/>
    </location>
</feature>
<feature type="sequence variant" id="VAR_068969" description="In CILD18; decreased protein abundance; dbSNP:rs397514561." evidence="4">
    <original>L</original>
    <variation>P</variation>
    <location>
        <position position="795"/>
    </location>
</feature>
<feature type="sequence conflict" description="In Ref. 3; AAH47240." evidence="9" ref="3">
    <original>P</original>
    <variation>H</variation>
    <location>
        <position position="128"/>
    </location>
</feature>
<feature type="sequence conflict" description="In Ref. 3; AAH10850." evidence="9" ref="3">
    <original>SCT</original>
    <variation>TSS</variation>
    <location>
        <begin position="419"/>
        <end position="421"/>
    </location>
</feature>
<feature type="sequence conflict" description="In Ref. 3; AAH47240." evidence="9" ref="3">
    <original>L</original>
    <variation>M</variation>
    <location>
        <position position="454"/>
    </location>
</feature>
<name>DAAF5_HUMAN</name>
<sequence>MAALGVAEAVAAPHPAEGAETAEAVELSRALSRLLPGLEADSKPGRRRALEALRRALEEPGPAADPTAFQGPWARLLLPRLLRCLSDPAEGCRALAVHLLDLGLRRAARPRDALPRLLPALAARLAGPVPARRPPEACEELRLALVQLLGLAVDLCGAALAPHLDDALRALRCSLLDPFAAVRRESCSCAAALAQATPDHFHMQSESLIGPLMQTISHQHWKVRVAAIEATGAVIHFGNGKSVDDVLSHFAQRLFDDVPQVRRAVASVVGGWLLCLRDRYSFFHKLIPLLLSSLNDEVPEVRQLAASLWEDVGLQWQKENEEDLKDKLDFAPPTPPHYPPHERRPVLGCRELVFRNLSKILPALCHDITDWVVGTRVKSAQLLPVLLLHAEDHATQHLEVVLRTLFQACTDEEAAVVQSCTRSAELVGTFVSPEVFLKLILSTLKKTPSASGLLVLASAMRGCPREALQPHLAAIATELAQAHICQASENDLYLERLLLCVQALVSVCHEDCGVASLQLLDVLLTIVALAGATGLRDKAQETMDSLAMVEGVSSCQDLYRKHIGPLLERVTASHLDWTAHSPELLQFSVIVAQSGPALGEALPHVVPTLRACLQPSQDPQMRLKLFSILSTVLLRATDTINSQGQFPSYLETVTKDILAPNLQWHAGRTAAAIRTAAVSCLWALTSSEVLSAEQIRDVQETLMPQVLTTLEEDSKMTRLISCRIINTFLKTSGGMTDPEKLIRIYPELLKRLDDVSNDVRMAAASTLVTWLQCVKGANAKSYYQSSVQYLYRELLVHLDDPERAIQDAILEVLKEGSGLFPDLLVRETEAVIHKHRSATYCEQLLQHVQAVPATQ</sequence>
<comment type="function">
    <text evidence="4 5">Cytoplasmic protein involved in the delivery of the dynein machinery to the motile cilium. It is required for the assembly of the axonemal dynein inner and outer arms, two structures attached to the peripheral outer doublet A microtubule of the axoneme, that play a crucial role in cilium motility.</text>
</comment>
<comment type="subunit">
    <text evidence="5">Interacts with DNAI2; probably involved in outer arm dynein assembly.</text>
</comment>
<comment type="subcellular location">
    <subcellularLocation>
        <location evidence="4 5">Cytoplasm</location>
    </subcellularLocation>
    <subcellularLocation>
        <location evidence="4 5">Dynein axonemal particle</location>
    </subcellularLocation>
    <text evidence="4 5">Observed only in the cytoplasm of ciliated cells and absent from cilia.</text>
</comment>
<comment type="alternative products">
    <event type="alternative splicing"/>
    <isoform>
        <id>Q86Y56-1</id>
        <name>1</name>
        <sequence type="displayed"/>
    </isoform>
    <isoform>
        <id>Q86Y56-2</id>
        <name>2</name>
        <sequence type="described" ref="VSP_016110"/>
    </isoform>
    <isoform>
        <id>Q86Y56-3</id>
        <name>3</name>
        <sequence type="described" ref="VSP_016109"/>
    </isoform>
</comment>
<comment type="tissue specificity">
    <text evidence="4">Expressed in nasal epithelium and lung epithelium by ciliated cells (at protein level).</text>
</comment>
<comment type="developmental stage">
    <text evidence="5">Expressed by immature cells in the process of extending cilia.</text>
</comment>
<comment type="disease" evidence="4 5">
    <disease id="DI-03539">
        <name>Ciliary dyskinesia, primary, 18</name>
        <acronym>CILD18</acronym>
        <description>A disorder characterized by abnormalities of motile cilia. Respiratory infections leading to chronic inflammation and bronchiectasis are recurrent, due to defects in the respiratory cilia; reduced fertility is often observed in male patients due to abnormalities of sperm tails. Half of the patients exhibit randomization of left-right body asymmetry and situs inversus, due to dysfunction of monocilia at the embryonic node. Primary ciliary dyskinesia associated with situs inversus is referred to as Kartagener syndrome.</description>
        <dbReference type="MIM" id="614874"/>
    </disease>
    <text>The disease is caused by variants affecting the gene represented in this entry.</text>
</comment>
<comment type="similarity">
    <text evidence="9">Belongs to the DNAAF5 family.</text>
</comment>
<comment type="sequence caution" evidence="9">
    <conflict type="erroneous initiation">
        <sequence resource="EMBL-CDS" id="AAH10850"/>
    </conflict>
    <text>Truncated N-terminus.</text>
</comment>
<reference key="1">
    <citation type="journal article" date="2004" name="Nat. Genet.">
        <title>Complete sequencing and characterization of 21,243 full-length human cDNAs.</title>
        <authorList>
            <person name="Ota T."/>
            <person name="Suzuki Y."/>
            <person name="Nishikawa T."/>
            <person name="Otsuki T."/>
            <person name="Sugiyama T."/>
            <person name="Irie R."/>
            <person name="Wakamatsu A."/>
            <person name="Hayashi K."/>
            <person name="Sato H."/>
            <person name="Nagai K."/>
            <person name="Kimura K."/>
            <person name="Makita H."/>
            <person name="Sekine M."/>
            <person name="Obayashi M."/>
            <person name="Nishi T."/>
            <person name="Shibahara T."/>
            <person name="Tanaka T."/>
            <person name="Ishii S."/>
            <person name="Yamamoto J."/>
            <person name="Saito K."/>
            <person name="Kawai Y."/>
            <person name="Isono Y."/>
            <person name="Nakamura Y."/>
            <person name="Nagahari K."/>
            <person name="Murakami K."/>
            <person name="Yasuda T."/>
            <person name="Iwayanagi T."/>
            <person name="Wagatsuma M."/>
            <person name="Shiratori A."/>
            <person name="Sudo H."/>
            <person name="Hosoiri T."/>
            <person name="Kaku Y."/>
            <person name="Kodaira H."/>
            <person name="Kondo H."/>
            <person name="Sugawara M."/>
            <person name="Takahashi M."/>
            <person name="Kanda K."/>
            <person name="Yokoi T."/>
            <person name="Furuya T."/>
            <person name="Kikkawa E."/>
            <person name="Omura Y."/>
            <person name="Abe K."/>
            <person name="Kamihara K."/>
            <person name="Katsuta N."/>
            <person name="Sato K."/>
            <person name="Tanikawa M."/>
            <person name="Yamazaki M."/>
            <person name="Ninomiya K."/>
            <person name="Ishibashi T."/>
            <person name="Yamashita H."/>
            <person name="Murakawa K."/>
            <person name="Fujimori K."/>
            <person name="Tanai H."/>
            <person name="Kimata M."/>
            <person name="Watanabe M."/>
            <person name="Hiraoka S."/>
            <person name="Chiba Y."/>
            <person name="Ishida S."/>
            <person name="Ono Y."/>
            <person name="Takiguchi S."/>
            <person name="Watanabe S."/>
            <person name="Yosida M."/>
            <person name="Hotuta T."/>
            <person name="Kusano J."/>
            <person name="Kanehori K."/>
            <person name="Takahashi-Fujii A."/>
            <person name="Hara H."/>
            <person name="Tanase T.-O."/>
            <person name="Nomura Y."/>
            <person name="Togiya S."/>
            <person name="Komai F."/>
            <person name="Hara R."/>
            <person name="Takeuchi K."/>
            <person name="Arita M."/>
            <person name="Imose N."/>
            <person name="Musashino K."/>
            <person name="Yuuki H."/>
            <person name="Oshima A."/>
            <person name="Sasaki N."/>
            <person name="Aotsuka S."/>
            <person name="Yoshikawa Y."/>
            <person name="Matsunawa H."/>
            <person name="Ichihara T."/>
            <person name="Shiohata N."/>
            <person name="Sano S."/>
            <person name="Moriya S."/>
            <person name="Momiyama H."/>
            <person name="Satoh N."/>
            <person name="Takami S."/>
            <person name="Terashima Y."/>
            <person name="Suzuki O."/>
            <person name="Nakagawa S."/>
            <person name="Senoh A."/>
            <person name="Mizoguchi H."/>
            <person name="Goto Y."/>
            <person name="Shimizu F."/>
            <person name="Wakebe H."/>
            <person name="Hishigaki H."/>
            <person name="Watanabe T."/>
            <person name="Sugiyama A."/>
            <person name="Takemoto M."/>
            <person name="Kawakami B."/>
            <person name="Yamazaki M."/>
            <person name="Watanabe K."/>
            <person name="Kumagai A."/>
            <person name="Itakura S."/>
            <person name="Fukuzumi Y."/>
            <person name="Fujimori Y."/>
            <person name="Komiyama M."/>
            <person name="Tashiro H."/>
            <person name="Tanigami A."/>
            <person name="Fujiwara T."/>
            <person name="Ono T."/>
            <person name="Yamada K."/>
            <person name="Fujii Y."/>
            <person name="Ozaki K."/>
            <person name="Hirao M."/>
            <person name="Ohmori Y."/>
            <person name="Kawabata A."/>
            <person name="Hikiji T."/>
            <person name="Kobatake N."/>
            <person name="Inagaki H."/>
            <person name="Ikema Y."/>
            <person name="Okamoto S."/>
            <person name="Okitani R."/>
            <person name="Kawakami T."/>
            <person name="Noguchi S."/>
            <person name="Itoh T."/>
            <person name="Shigeta K."/>
            <person name="Senba T."/>
            <person name="Matsumura K."/>
            <person name="Nakajima Y."/>
            <person name="Mizuno T."/>
            <person name="Morinaga M."/>
            <person name="Sasaki M."/>
            <person name="Togashi T."/>
            <person name="Oyama M."/>
            <person name="Hata H."/>
            <person name="Watanabe M."/>
            <person name="Komatsu T."/>
            <person name="Mizushima-Sugano J."/>
            <person name="Satoh T."/>
            <person name="Shirai Y."/>
            <person name="Takahashi Y."/>
            <person name="Nakagawa K."/>
            <person name="Okumura K."/>
            <person name="Nagase T."/>
            <person name="Nomura N."/>
            <person name="Kikuchi H."/>
            <person name="Masuho Y."/>
            <person name="Yamashita R."/>
            <person name="Nakai K."/>
            <person name="Yada T."/>
            <person name="Nakamura Y."/>
            <person name="Ohara O."/>
            <person name="Isogai T."/>
            <person name="Sugano S."/>
        </authorList>
    </citation>
    <scope>NUCLEOTIDE SEQUENCE [LARGE SCALE MRNA] (ISOFORM 3)</scope>
    <scope>VARIANT LYS-743</scope>
    <source>
        <tissue>Colon carcinoma</tissue>
    </source>
</reference>
<reference key="2">
    <citation type="journal article" date="2003" name="Nature">
        <title>The DNA sequence of human chromosome 7.</title>
        <authorList>
            <person name="Hillier L.W."/>
            <person name="Fulton R.S."/>
            <person name="Fulton L.A."/>
            <person name="Graves T.A."/>
            <person name="Pepin K.H."/>
            <person name="Wagner-McPherson C."/>
            <person name="Layman D."/>
            <person name="Maas J."/>
            <person name="Jaeger S."/>
            <person name="Walker R."/>
            <person name="Wylie K."/>
            <person name="Sekhon M."/>
            <person name="Becker M.C."/>
            <person name="O'Laughlin M.D."/>
            <person name="Schaller M.E."/>
            <person name="Fewell G.A."/>
            <person name="Delehaunty K.D."/>
            <person name="Miner T.L."/>
            <person name="Nash W.E."/>
            <person name="Cordes M."/>
            <person name="Du H."/>
            <person name="Sun H."/>
            <person name="Edwards J."/>
            <person name="Bradshaw-Cordum H."/>
            <person name="Ali J."/>
            <person name="Andrews S."/>
            <person name="Isak A."/>
            <person name="Vanbrunt A."/>
            <person name="Nguyen C."/>
            <person name="Du F."/>
            <person name="Lamar B."/>
            <person name="Courtney L."/>
            <person name="Kalicki J."/>
            <person name="Ozersky P."/>
            <person name="Bielicki L."/>
            <person name="Scott K."/>
            <person name="Holmes A."/>
            <person name="Harkins R."/>
            <person name="Harris A."/>
            <person name="Strong C.M."/>
            <person name="Hou S."/>
            <person name="Tomlinson C."/>
            <person name="Dauphin-Kohlberg S."/>
            <person name="Kozlowicz-Reilly A."/>
            <person name="Leonard S."/>
            <person name="Rohlfing T."/>
            <person name="Rock S.M."/>
            <person name="Tin-Wollam A.-M."/>
            <person name="Abbott A."/>
            <person name="Minx P."/>
            <person name="Maupin R."/>
            <person name="Strowmatt C."/>
            <person name="Latreille P."/>
            <person name="Miller N."/>
            <person name="Johnson D."/>
            <person name="Murray J."/>
            <person name="Woessner J.P."/>
            <person name="Wendl M.C."/>
            <person name="Yang S.-P."/>
            <person name="Schultz B.R."/>
            <person name="Wallis J.W."/>
            <person name="Spieth J."/>
            <person name="Bieri T.A."/>
            <person name="Nelson J.O."/>
            <person name="Berkowicz N."/>
            <person name="Wohldmann P.E."/>
            <person name="Cook L.L."/>
            <person name="Hickenbotham M.T."/>
            <person name="Eldred J."/>
            <person name="Williams D."/>
            <person name="Bedell J.A."/>
            <person name="Mardis E.R."/>
            <person name="Clifton S.W."/>
            <person name="Chissoe S.L."/>
            <person name="Marra M.A."/>
            <person name="Raymond C."/>
            <person name="Haugen E."/>
            <person name="Gillett W."/>
            <person name="Zhou Y."/>
            <person name="James R."/>
            <person name="Phelps K."/>
            <person name="Iadanoto S."/>
            <person name="Bubb K."/>
            <person name="Simms E."/>
            <person name="Levy R."/>
            <person name="Clendenning J."/>
            <person name="Kaul R."/>
            <person name="Kent W.J."/>
            <person name="Furey T.S."/>
            <person name="Baertsch R.A."/>
            <person name="Brent M.R."/>
            <person name="Keibler E."/>
            <person name="Flicek P."/>
            <person name="Bork P."/>
            <person name="Suyama M."/>
            <person name="Bailey J.A."/>
            <person name="Portnoy M.E."/>
            <person name="Torrents D."/>
            <person name="Chinwalla A.T."/>
            <person name="Gish W.R."/>
            <person name="Eddy S.R."/>
            <person name="McPherson J.D."/>
            <person name="Olson M.V."/>
            <person name="Eichler E.E."/>
            <person name="Green E.D."/>
            <person name="Waterston R.H."/>
            <person name="Wilson R.K."/>
        </authorList>
    </citation>
    <scope>NUCLEOTIDE SEQUENCE [LARGE SCALE GENOMIC DNA]</scope>
</reference>
<reference key="3">
    <citation type="journal article" date="2004" name="Genome Res.">
        <title>The status, quality, and expansion of the NIH full-length cDNA project: the Mammalian Gene Collection (MGC).</title>
        <authorList>
            <consortium name="The MGC Project Team"/>
        </authorList>
    </citation>
    <scope>NUCLEOTIDE SEQUENCE [LARGE SCALE MRNA] (ISOFORM 1)</scope>
    <scope>NUCLEOTIDE SEQUENCE [LARGE SCALE MRNA] OF 422-855 (ISOFORM 2)</scope>
    <scope>VARIANT LYS-743</scope>
    <source>
        <tissue>Hippocampus</tissue>
        <tissue>Pancreas</tissue>
    </source>
</reference>
<reference key="4">
    <citation type="submission" date="2005-06" db="UniProtKB">
        <authorList>
            <person name="Bienvenut W.V."/>
        </authorList>
    </citation>
    <scope>PROTEIN SEQUENCE OF 94-105; 423-438; 625-655 AND 804-814</scope>
    <scope>IDENTIFICATION BY MASS SPECTROMETRY</scope>
    <source>
        <tissue>B-cell lymphoma</tissue>
    </source>
</reference>
<reference key="5">
    <citation type="journal article" date="2007" name="BMC Genomics">
        <title>The full-ORF clone resource of the German cDNA consortium.</title>
        <authorList>
            <person name="Bechtel S."/>
            <person name="Rosenfelder H."/>
            <person name="Duda A."/>
            <person name="Schmidt C.P."/>
            <person name="Ernst U."/>
            <person name="Wellenreuther R."/>
            <person name="Mehrle A."/>
            <person name="Schuster C."/>
            <person name="Bahr A."/>
            <person name="Bloecker H."/>
            <person name="Heubner D."/>
            <person name="Hoerlein A."/>
            <person name="Michel G."/>
            <person name="Wedler H."/>
            <person name="Koehrer K."/>
            <person name="Ottenwaelder B."/>
            <person name="Poustka A."/>
            <person name="Wiemann S."/>
            <person name="Schupp I."/>
        </authorList>
    </citation>
    <scope>NUCLEOTIDE SEQUENCE [LARGE SCALE MRNA] OF 662-855 (ISOFORMS 1/3)</scope>
    <scope>VARIANT LYS-743</scope>
    <source>
        <tissue>Melanoma</tissue>
    </source>
</reference>
<reference key="6">
    <citation type="journal article" date="2009" name="Anal. Chem.">
        <title>Lys-N and trypsin cover complementary parts of the phosphoproteome in a refined SCX-based approach.</title>
        <authorList>
            <person name="Gauci S."/>
            <person name="Helbig A.O."/>
            <person name="Slijper M."/>
            <person name="Krijgsveld J."/>
            <person name="Heck A.J."/>
            <person name="Mohammed S."/>
        </authorList>
    </citation>
    <scope>ACETYLATION [LARGE SCALE ANALYSIS] AT ALA-2</scope>
    <scope>CLEAVAGE OF INITIATOR METHIONINE [LARGE SCALE ANALYSIS]</scope>
    <scope>IDENTIFICATION BY MASS SPECTROMETRY [LARGE SCALE ANALYSIS]</scope>
</reference>
<reference key="7">
    <citation type="journal article" date="2011" name="BMC Syst. Biol.">
        <title>Initial characterization of the human central proteome.</title>
        <authorList>
            <person name="Burkard T.R."/>
            <person name="Planyavsky M."/>
            <person name="Kaupe I."/>
            <person name="Breitwieser F.P."/>
            <person name="Buerckstuemmer T."/>
            <person name="Bennett K.L."/>
            <person name="Superti-Furga G."/>
            <person name="Colinge J."/>
        </authorList>
    </citation>
    <scope>IDENTIFICATION BY MASS SPECTROMETRY [LARGE SCALE ANALYSIS]</scope>
</reference>
<reference key="8">
    <citation type="journal article" date="2012" name="Mol. Cell. Proteomics">
        <title>Comparative large-scale characterisation of plant vs. mammal proteins reveals similar and idiosyncratic N-alpha acetylation features.</title>
        <authorList>
            <person name="Bienvenut W.V."/>
            <person name="Sumpton D."/>
            <person name="Martinez A."/>
            <person name="Lilla S."/>
            <person name="Espagne C."/>
            <person name="Meinnel T."/>
            <person name="Giglione C."/>
        </authorList>
    </citation>
    <scope>ACETYLATION [LARGE SCALE ANALYSIS] AT ALA-2</scope>
    <scope>CLEAVAGE OF INITIATOR METHIONINE [LARGE SCALE ANALYSIS]</scope>
    <scope>IDENTIFICATION BY MASS SPECTROMETRY [LARGE SCALE ANALYSIS]</scope>
</reference>
<reference key="9">
    <citation type="journal article" date="2012" name="Proc. Natl. Acad. Sci. U.S.A.">
        <title>N-terminal acetylome analyses and functional insights of the N-terminal acetyltransferase NatB.</title>
        <authorList>
            <person name="Van Damme P."/>
            <person name="Lasa M."/>
            <person name="Polevoda B."/>
            <person name="Gazquez C."/>
            <person name="Elosegui-Artola A."/>
            <person name="Kim D.S."/>
            <person name="De Juan-Pardo E."/>
            <person name="Demeyer K."/>
            <person name="Hole K."/>
            <person name="Larrea E."/>
            <person name="Timmerman E."/>
            <person name="Prieto J."/>
            <person name="Arnesen T."/>
            <person name="Sherman F."/>
            <person name="Gevaert K."/>
            <person name="Aldabe R."/>
        </authorList>
    </citation>
    <scope>ACETYLATION [LARGE SCALE ANALYSIS] AT ALA-2</scope>
    <scope>CLEAVAGE OF INITIATOR METHIONINE [LARGE SCALE ANALYSIS]</scope>
    <scope>IDENTIFICATION BY MASS SPECTROMETRY [LARGE SCALE ANALYSIS]</scope>
</reference>
<reference key="10">
    <citation type="journal article" date="2014" name="PLoS Genet.">
        <title>HEATR2 plays a conserved role in assembly of the ciliary motile apparatus.</title>
        <authorList>
            <person name="Diggle C.P."/>
            <person name="Moore D.J."/>
            <person name="Mali G."/>
            <person name="zur Lage P."/>
            <person name="Ait-Lounis A."/>
            <person name="Schmidts M."/>
            <person name="Shoemark A."/>
            <person name="Garcia Munoz A."/>
            <person name="Halachev M.R."/>
            <person name="Gautier P."/>
            <person name="Yeyati P.L."/>
            <person name="Bonthron D.T."/>
            <person name="Carr I.M."/>
            <person name="Hayward B."/>
            <person name="Markham A.F."/>
            <person name="Hope J.E."/>
            <person name="von Kriegsheim A."/>
            <person name="Mitchison H.M."/>
            <person name="Jackson I.J."/>
            <person name="Durand B."/>
            <person name="Reith W."/>
            <person name="Sheridan E."/>
            <person name="Jarman A.P."/>
            <person name="Mill P."/>
        </authorList>
    </citation>
    <scope>INVOLVEMENT IN CILD18</scope>
    <scope>FUNCTION</scope>
    <scope>INTERACTION WITH DNAI2</scope>
    <scope>SUBCELLULAR LOCATION</scope>
    <scope>DEVELOPMENTAL STAGE</scope>
</reference>
<reference key="11">
    <citation type="journal article" date="2012" name="Am. J. Hum. Genet.">
        <title>Whole-exome capture and sequencing identifies HEATR2 mutation as a cause of primary ciliary dyskinesia.</title>
        <authorList>
            <person name="Horani A."/>
            <person name="Druley T.E."/>
            <person name="Zariwala M.A."/>
            <person name="Patel A.C."/>
            <person name="Levinson B.T."/>
            <person name="Van Arendonk L.G."/>
            <person name="Thornton K.C."/>
            <person name="Giacalone J.C."/>
            <person name="Albee A.J."/>
            <person name="Wilson K.S."/>
            <person name="Turner E.H."/>
            <person name="Nickerson D.A."/>
            <person name="Shendure J."/>
            <person name="Bayly P.V."/>
            <person name="Leigh M.W."/>
            <person name="Knowles M.R."/>
            <person name="Brody S.L."/>
            <person name="Dutcher S.K."/>
            <person name="Ferkol T.W."/>
        </authorList>
    </citation>
    <scope>VARIANT CILD18 PRO-795</scope>
    <scope>CHARACTERIZATION OF VARIANT CILD18 PRO-795</scope>
    <scope>FUNCTION</scope>
    <scope>SUBCELLULAR LOCATION</scope>
    <scope>TISSUE SPECIFICITY</scope>
</reference>
<accession>Q86Y56</accession>
<accession>Q69YL1</accession>
<accession>Q96FI9</accession>
<accession>Q9NX75</accession>
<protein>
    <recommendedName>
        <fullName evidence="8 10">Dynein axonemal assembly factor 5</fullName>
    </recommendedName>
    <alternativeName>
        <fullName evidence="9">HEAT repeat-containing protein 2</fullName>
    </alternativeName>
</protein>
<organism>
    <name type="scientific">Homo sapiens</name>
    <name type="common">Human</name>
    <dbReference type="NCBI Taxonomy" id="9606"/>
    <lineage>
        <taxon>Eukaryota</taxon>
        <taxon>Metazoa</taxon>
        <taxon>Chordata</taxon>
        <taxon>Craniata</taxon>
        <taxon>Vertebrata</taxon>
        <taxon>Euteleostomi</taxon>
        <taxon>Mammalia</taxon>
        <taxon>Eutheria</taxon>
        <taxon>Euarchontoglires</taxon>
        <taxon>Primates</taxon>
        <taxon>Haplorrhini</taxon>
        <taxon>Catarrhini</taxon>
        <taxon>Hominidae</taxon>
        <taxon>Homo</taxon>
    </lineage>
</organism>
<proteinExistence type="evidence at protein level"/>
<gene>
    <name evidence="8 10" type="primary">DNAAF5</name>
    <name evidence="10" type="synonym">HEATR2</name>
</gene>
<keyword id="KW-0007">Acetylation</keyword>
<keyword id="KW-0025">Alternative splicing</keyword>
<keyword id="KW-1186">Ciliopathy</keyword>
<keyword id="KW-0970">Cilium biogenesis/degradation</keyword>
<keyword id="KW-0963">Cytoplasm</keyword>
<keyword id="KW-0903">Direct protein sequencing</keyword>
<keyword id="KW-0225">Disease variant</keyword>
<keyword id="KW-1012">Kartagener syndrome</keyword>
<keyword id="KW-0990">Primary ciliary dyskinesia</keyword>
<keyword id="KW-1267">Proteomics identification</keyword>
<keyword id="KW-1185">Reference proteome</keyword>
<keyword id="KW-0677">Repeat</keyword>
<evidence type="ECO:0000269" key="1">
    <source>
    </source>
</evidence>
<evidence type="ECO:0000269" key="2">
    <source>
    </source>
</evidence>
<evidence type="ECO:0000269" key="3">
    <source>
    </source>
</evidence>
<evidence type="ECO:0000269" key="4">
    <source>
    </source>
</evidence>
<evidence type="ECO:0000269" key="5">
    <source>
    </source>
</evidence>
<evidence type="ECO:0000303" key="6">
    <source>
    </source>
</evidence>
<evidence type="ECO:0000303" key="7">
    <source>
    </source>
</evidence>
<evidence type="ECO:0000303" key="8">
    <source>
    </source>
</evidence>
<evidence type="ECO:0000305" key="9"/>
<evidence type="ECO:0000312" key="10">
    <source>
        <dbReference type="HGNC" id="HGNC:26013"/>
    </source>
</evidence>
<evidence type="ECO:0007744" key="11">
    <source>
    </source>
</evidence>
<evidence type="ECO:0007744" key="12">
    <source>
    </source>
</evidence>
<evidence type="ECO:0007744" key="13">
    <source>
    </source>
</evidence>
<dbReference type="EMBL" id="AK000404">
    <property type="protein sequence ID" value="BAA91142.1"/>
    <property type="molecule type" value="mRNA"/>
</dbReference>
<dbReference type="EMBL" id="AC144411">
    <property type="status" value="NOT_ANNOTATED_CDS"/>
    <property type="molecule type" value="Genomic_DNA"/>
</dbReference>
<dbReference type="EMBL" id="BC010850">
    <property type="protein sequence ID" value="AAH10850.1"/>
    <property type="status" value="ALT_INIT"/>
    <property type="molecule type" value="mRNA"/>
</dbReference>
<dbReference type="EMBL" id="BC047240">
    <property type="protein sequence ID" value="AAH47240.1"/>
    <property type="molecule type" value="mRNA"/>
</dbReference>
<dbReference type="EMBL" id="AL832914">
    <property type="protein sequence ID" value="CAH10624.2"/>
    <property type="molecule type" value="mRNA"/>
</dbReference>
<dbReference type="CCDS" id="CCDS34580.1">
    <molecule id="Q86Y56-1"/>
</dbReference>
<dbReference type="RefSeq" id="NP_060272.3">
    <molecule id="Q86Y56-1"/>
    <property type="nucleotide sequence ID" value="NM_017802.3"/>
</dbReference>
<dbReference type="BioGRID" id="120260">
    <property type="interactions" value="200"/>
</dbReference>
<dbReference type="CORUM" id="Q86Y56"/>
<dbReference type="FunCoup" id="Q86Y56">
    <property type="interactions" value="1585"/>
</dbReference>
<dbReference type="IntAct" id="Q86Y56">
    <property type="interactions" value="103"/>
</dbReference>
<dbReference type="MINT" id="Q86Y56"/>
<dbReference type="STRING" id="9606.ENSP00000297440"/>
<dbReference type="GlyGen" id="Q86Y56">
    <property type="glycosylation" value="1 site, 1 O-linked glycan (1 site)"/>
</dbReference>
<dbReference type="iPTMnet" id="Q86Y56"/>
<dbReference type="PhosphoSitePlus" id="Q86Y56"/>
<dbReference type="SwissPalm" id="Q86Y56"/>
<dbReference type="BioMuta" id="DNAAF5"/>
<dbReference type="DMDM" id="317373567"/>
<dbReference type="jPOST" id="Q86Y56"/>
<dbReference type="MassIVE" id="Q86Y56"/>
<dbReference type="PaxDb" id="9606-ENSP00000297440"/>
<dbReference type="PeptideAtlas" id="Q86Y56"/>
<dbReference type="ProteomicsDB" id="70375">
    <molecule id="Q86Y56-1"/>
</dbReference>
<dbReference type="ProteomicsDB" id="70376">
    <molecule id="Q86Y56-2"/>
</dbReference>
<dbReference type="ProteomicsDB" id="70377">
    <molecule id="Q86Y56-3"/>
</dbReference>
<dbReference type="Pumba" id="Q86Y56"/>
<dbReference type="Antibodypedia" id="10790">
    <property type="antibodies" value="83 antibodies from 18 providers"/>
</dbReference>
<dbReference type="DNASU" id="54919"/>
<dbReference type="Ensembl" id="ENST00000297440.11">
    <molecule id="Q86Y56-1"/>
    <property type="protein sequence ID" value="ENSP00000297440.6"/>
    <property type="gene ID" value="ENSG00000164818.16"/>
</dbReference>
<dbReference type="GeneID" id="54919"/>
<dbReference type="KEGG" id="hsa:54919"/>
<dbReference type="MANE-Select" id="ENST00000297440.11">
    <property type="protein sequence ID" value="ENSP00000297440.6"/>
    <property type="RefSeq nucleotide sequence ID" value="NM_017802.4"/>
    <property type="RefSeq protein sequence ID" value="NP_060272.3"/>
</dbReference>
<dbReference type="UCSC" id="uc010krz.2">
    <molecule id="Q86Y56-1"/>
    <property type="organism name" value="human"/>
</dbReference>
<dbReference type="AGR" id="HGNC:26013"/>
<dbReference type="CTD" id="54919"/>
<dbReference type="DisGeNET" id="54919"/>
<dbReference type="GeneCards" id="DNAAF5"/>
<dbReference type="GeneReviews" id="DNAAF5"/>
<dbReference type="HGNC" id="HGNC:26013">
    <property type="gene designation" value="DNAAF5"/>
</dbReference>
<dbReference type="HPA" id="ENSG00000164818">
    <property type="expression patterns" value="Low tissue specificity"/>
</dbReference>
<dbReference type="MalaCards" id="DNAAF5"/>
<dbReference type="MIM" id="614864">
    <property type="type" value="gene"/>
</dbReference>
<dbReference type="MIM" id="614874">
    <property type="type" value="phenotype"/>
</dbReference>
<dbReference type="neXtProt" id="NX_Q86Y56"/>
<dbReference type="OpenTargets" id="ENSG00000164818"/>
<dbReference type="Orphanet" id="244">
    <property type="disease" value="Primary ciliary dyskinesia"/>
</dbReference>
<dbReference type="PharmGKB" id="PA145008229"/>
<dbReference type="VEuPathDB" id="HostDB:ENSG00000164818"/>
<dbReference type="eggNOG" id="ENOG502QRXT">
    <property type="taxonomic scope" value="Eukaryota"/>
</dbReference>
<dbReference type="GeneTree" id="ENSGT00390000005666"/>
<dbReference type="HOGENOM" id="CLU_010823_1_0_1"/>
<dbReference type="InParanoid" id="Q86Y56"/>
<dbReference type="OMA" id="AFQGPWA"/>
<dbReference type="OrthoDB" id="413572at2759"/>
<dbReference type="PAN-GO" id="Q86Y56">
    <property type="GO annotations" value="5 GO annotations based on evolutionary models"/>
</dbReference>
<dbReference type="PhylomeDB" id="Q86Y56"/>
<dbReference type="TreeFam" id="TF326738"/>
<dbReference type="PathwayCommons" id="Q86Y56"/>
<dbReference type="SignaLink" id="Q86Y56"/>
<dbReference type="BioGRID-ORCS" id="54919">
    <property type="hits" value="66 hits in 1151 CRISPR screens"/>
</dbReference>
<dbReference type="ChiTaRS" id="DNAAF5">
    <property type="organism name" value="human"/>
</dbReference>
<dbReference type="GenomeRNAi" id="54919"/>
<dbReference type="Pharos" id="Q86Y56">
    <property type="development level" value="Tbio"/>
</dbReference>
<dbReference type="PRO" id="PR:Q86Y56"/>
<dbReference type="Proteomes" id="UP000005640">
    <property type="component" value="Chromosome 7"/>
</dbReference>
<dbReference type="RNAct" id="Q86Y56">
    <property type="molecule type" value="protein"/>
</dbReference>
<dbReference type="Bgee" id="ENSG00000164818">
    <property type="expression patterns" value="Expressed in bronchial epithelial cell and 200 other cell types or tissues"/>
</dbReference>
<dbReference type="ExpressionAtlas" id="Q86Y56">
    <property type="expression patterns" value="baseline and differential"/>
</dbReference>
<dbReference type="GO" id="GO:0005737">
    <property type="term" value="C:cytoplasm"/>
    <property type="evidence" value="ECO:0000314"/>
    <property type="project" value="UniProtKB"/>
</dbReference>
<dbReference type="GO" id="GO:0005829">
    <property type="term" value="C:cytosol"/>
    <property type="evidence" value="ECO:0000314"/>
    <property type="project" value="HPA"/>
</dbReference>
<dbReference type="GO" id="GO:0120293">
    <property type="term" value="C:dynein axonemal particle"/>
    <property type="evidence" value="ECO:0000250"/>
    <property type="project" value="UniProtKB"/>
</dbReference>
<dbReference type="GO" id="GO:0015630">
    <property type="term" value="C:microtubule cytoskeleton"/>
    <property type="evidence" value="ECO:0000314"/>
    <property type="project" value="HPA"/>
</dbReference>
<dbReference type="GO" id="GO:0072686">
    <property type="term" value="C:mitotic spindle"/>
    <property type="evidence" value="ECO:0000314"/>
    <property type="project" value="HPA"/>
</dbReference>
<dbReference type="GO" id="GO:0005730">
    <property type="term" value="C:nucleolus"/>
    <property type="evidence" value="ECO:0000314"/>
    <property type="project" value="HPA"/>
</dbReference>
<dbReference type="GO" id="GO:0045505">
    <property type="term" value="F:dynein intermediate chain binding"/>
    <property type="evidence" value="ECO:0000353"/>
    <property type="project" value="UniProtKB"/>
</dbReference>
<dbReference type="GO" id="GO:0003341">
    <property type="term" value="P:cilium movement"/>
    <property type="evidence" value="ECO:0000315"/>
    <property type="project" value="UniProtKB"/>
</dbReference>
<dbReference type="GO" id="GO:0036159">
    <property type="term" value="P:inner dynein arm assembly"/>
    <property type="evidence" value="ECO:0000315"/>
    <property type="project" value="UniProtKB"/>
</dbReference>
<dbReference type="GO" id="GO:0036158">
    <property type="term" value="P:outer dynein arm assembly"/>
    <property type="evidence" value="ECO:0000315"/>
    <property type="project" value="UniProtKB"/>
</dbReference>
<dbReference type="FunFam" id="1.25.10.10:FF:000547">
    <property type="entry name" value="Dynein assembly factor 5, axonemal"/>
    <property type="match status" value="1"/>
</dbReference>
<dbReference type="FunFam" id="1.25.10.10:FF:000746">
    <property type="entry name" value="Dynein assembly factor 5, axonemal"/>
    <property type="match status" value="1"/>
</dbReference>
<dbReference type="FunFam" id="1.25.10.10:FF:001083">
    <property type="entry name" value="Dynein assembly factor 5, axonemal"/>
    <property type="match status" value="1"/>
</dbReference>
<dbReference type="Gene3D" id="1.25.10.10">
    <property type="entry name" value="Leucine-rich Repeat Variant"/>
    <property type="match status" value="4"/>
</dbReference>
<dbReference type="InterPro" id="IPR011989">
    <property type="entry name" value="ARM-like"/>
</dbReference>
<dbReference type="InterPro" id="IPR016024">
    <property type="entry name" value="ARM-type_fold"/>
</dbReference>
<dbReference type="InterPro" id="IPR052623">
    <property type="entry name" value="DAAF5"/>
</dbReference>
<dbReference type="InterPro" id="IPR000357">
    <property type="entry name" value="HEAT"/>
</dbReference>
<dbReference type="InterPro" id="IPR056497">
    <property type="entry name" value="HEAT_DAAF5"/>
</dbReference>
<dbReference type="InterPro" id="IPR021133">
    <property type="entry name" value="HEAT_type_2"/>
</dbReference>
<dbReference type="InterPro" id="IPR034085">
    <property type="entry name" value="TOG"/>
</dbReference>
<dbReference type="PANTHER" id="PTHR16216">
    <property type="entry name" value="DYNEIN ASSEMBLY FACTOR 5, AXONEMAL"/>
    <property type="match status" value="1"/>
</dbReference>
<dbReference type="PANTHER" id="PTHR16216:SF2">
    <property type="entry name" value="DYNEIN AXONEMAL ASSEMBLY FACTOR 5"/>
    <property type="match status" value="1"/>
</dbReference>
<dbReference type="Pfam" id="PF02985">
    <property type="entry name" value="HEAT"/>
    <property type="match status" value="2"/>
</dbReference>
<dbReference type="Pfam" id="PF24573">
    <property type="entry name" value="HEAT_DAAF5"/>
    <property type="match status" value="1"/>
</dbReference>
<dbReference type="SMART" id="SM01349">
    <property type="entry name" value="TOG"/>
    <property type="match status" value="1"/>
</dbReference>
<dbReference type="SUPFAM" id="SSF48371">
    <property type="entry name" value="ARM repeat"/>
    <property type="match status" value="1"/>
</dbReference>
<dbReference type="PROSITE" id="PS50077">
    <property type="entry name" value="HEAT_REPEAT"/>
    <property type="match status" value="1"/>
</dbReference>